<dbReference type="EC" id="3.4.24.-" evidence="1"/>
<dbReference type="EMBL" id="CP000010">
    <property type="protein sequence ID" value="AAU48968.1"/>
    <property type="molecule type" value="Genomic_DNA"/>
</dbReference>
<dbReference type="RefSeq" id="WP_004189409.1">
    <property type="nucleotide sequence ID" value="NC_006348.1"/>
</dbReference>
<dbReference type="RefSeq" id="YP_101985.1">
    <property type="nucleotide sequence ID" value="NC_006348.1"/>
</dbReference>
<dbReference type="GeneID" id="93058627"/>
<dbReference type="KEGG" id="bma:BMA0145"/>
<dbReference type="PATRIC" id="fig|243160.12.peg.144"/>
<dbReference type="eggNOG" id="COG0501">
    <property type="taxonomic scope" value="Bacteria"/>
</dbReference>
<dbReference type="HOGENOM" id="CLU_042266_3_0_4"/>
<dbReference type="Proteomes" id="UP000006693">
    <property type="component" value="Chromosome 1"/>
</dbReference>
<dbReference type="GO" id="GO:0005886">
    <property type="term" value="C:plasma membrane"/>
    <property type="evidence" value="ECO:0007669"/>
    <property type="project" value="UniProtKB-SubCell"/>
</dbReference>
<dbReference type="GO" id="GO:0004222">
    <property type="term" value="F:metalloendopeptidase activity"/>
    <property type="evidence" value="ECO:0007669"/>
    <property type="project" value="UniProtKB-UniRule"/>
</dbReference>
<dbReference type="GO" id="GO:0008270">
    <property type="term" value="F:zinc ion binding"/>
    <property type="evidence" value="ECO:0007669"/>
    <property type="project" value="UniProtKB-UniRule"/>
</dbReference>
<dbReference type="GO" id="GO:0006508">
    <property type="term" value="P:proteolysis"/>
    <property type="evidence" value="ECO:0007669"/>
    <property type="project" value="UniProtKB-KW"/>
</dbReference>
<dbReference type="CDD" id="cd07336">
    <property type="entry name" value="M48B_HtpX_like"/>
    <property type="match status" value="1"/>
</dbReference>
<dbReference type="Gene3D" id="3.30.2010.10">
    <property type="entry name" value="Metalloproteases ('zincins'), catalytic domain"/>
    <property type="match status" value="1"/>
</dbReference>
<dbReference type="HAMAP" id="MF_00188">
    <property type="entry name" value="Pept_M48_protease_HtpX"/>
    <property type="match status" value="1"/>
</dbReference>
<dbReference type="InterPro" id="IPR050083">
    <property type="entry name" value="HtpX_protease"/>
</dbReference>
<dbReference type="InterPro" id="IPR022919">
    <property type="entry name" value="Pept_M48_protease_HtpX"/>
</dbReference>
<dbReference type="InterPro" id="IPR001915">
    <property type="entry name" value="Peptidase_M48"/>
</dbReference>
<dbReference type="NCBIfam" id="NF002363">
    <property type="entry name" value="PRK01345.1"/>
    <property type="match status" value="1"/>
</dbReference>
<dbReference type="NCBIfam" id="NF002826">
    <property type="entry name" value="PRK03001.1"/>
    <property type="match status" value="1"/>
</dbReference>
<dbReference type="PANTHER" id="PTHR43221">
    <property type="entry name" value="PROTEASE HTPX"/>
    <property type="match status" value="1"/>
</dbReference>
<dbReference type="PANTHER" id="PTHR43221:SF1">
    <property type="entry name" value="PROTEASE HTPX"/>
    <property type="match status" value="1"/>
</dbReference>
<dbReference type="Pfam" id="PF01435">
    <property type="entry name" value="Peptidase_M48"/>
    <property type="match status" value="1"/>
</dbReference>
<feature type="chain" id="PRO_1000077453" description="Protease HtpX homolog">
    <location>
        <begin position="1"/>
        <end position="285"/>
    </location>
</feature>
<feature type="transmembrane region" description="Helical" evidence="1">
    <location>
        <begin position="7"/>
        <end position="27"/>
    </location>
</feature>
<feature type="transmembrane region" description="Helical" evidence="1">
    <location>
        <begin position="30"/>
        <end position="50"/>
    </location>
</feature>
<feature type="transmembrane region" description="Helical" evidence="1">
    <location>
        <begin position="146"/>
        <end position="166"/>
    </location>
</feature>
<feature type="transmembrane region" description="Helical" evidence="1">
    <location>
        <begin position="177"/>
        <end position="197"/>
    </location>
</feature>
<feature type="active site" evidence="1">
    <location>
        <position position="132"/>
    </location>
</feature>
<feature type="binding site" evidence="1">
    <location>
        <position position="131"/>
    </location>
    <ligand>
        <name>Zn(2+)</name>
        <dbReference type="ChEBI" id="CHEBI:29105"/>
        <note>catalytic</note>
    </ligand>
</feature>
<feature type="binding site" evidence="1">
    <location>
        <position position="135"/>
    </location>
    <ligand>
        <name>Zn(2+)</name>
        <dbReference type="ChEBI" id="CHEBI:29105"/>
        <note>catalytic</note>
    </ligand>
</feature>
<feature type="binding site" evidence="1">
    <location>
        <position position="202"/>
    </location>
    <ligand>
        <name>Zn(2+)</name>
        <dbReference type="ChEBI" id="CHEBI:29105"/>
        <note>catalytic</note>
    </ligand>
</feature>
<evidence type="ECO:0000255" key="1">
    <source>
        <dbReference type="HAMAP-Rule" id="MF_00188"/>
    </source>
</evidence>
<organism>
    <name type="scientific">Burkholderia mallei (strain ATCC 23344)</name>
    <dbReference type="NCBI Taxonomy" id="243160"/>
    <lineage>
        <taxon>Bacteria</taxon>
        <taxon>Pseudomonadati</taxon>
        <taxon>Pseudomonadota</taxon>
        <taxon>Betaproteobacteria</taxon>
        <taxon>Burkholderiales</taxon>
        <taxon>Burkholderiaceae</taxon>
        <taxon>Burkholderia</taxon>
        <taxon>pseudomallei group</taxon>
    </lineage>
</organism>
<reference key="1">
    <citation type="journal article" date="2004" name="Proc. Natl. Acad. Sci. U.S.A.">
        <title>Structural flexibility in the Burkholderia mallei genome.</title>
        <authorList>
            <person name="Nierman W.C."/>
            <person name="DeShazer D."/>
            <person name="Kim H.S."/>
            <person name="Tettelin H."/>
            <person name="Nelson K.E."/>
            <person name="Feldblyum T.V."/>
            <person name="Ulrich R.L."/>
            <person name="Ronning C.M."/>
            <person name="Brinkac L.M."/>
            <person name="Daugherty S.C."/>
            <person name="Davidsen T.D."/>
            <person name="DeBoy R.T."/>
            <person name="Dimitrov G."/>
            <person name="Dodson R.J."/>
            <person name="Durkin A.S."/>
            <person name="Gwinn M.L."/>
            <person name="Haft D.H."/>
            <person name="Khouri H.M."/>
            <person name="Kolonay J.F."/>
            <person name="Madupu R."/>
            <person name="Mohammoud Y."/>
            <person name="Nelson W.C."/>
            <person name="Radune D."/>
            <person name="Romero C.M."/>
            <person name="Sarria S."/>
            <person name="Selengut J."/>
            <person name="Shamblin C."/>
            <person name="Sullivan S.A."/>
            <person name="White O."/>
            <person name="Yu Y."/>
            <person name="Zafar N."/>
            <person name="Zhou L."/>
            <person name="Fraser C.M."/>
        </authorList>
    </citation>
    <scope>NUCLEOTIDE SEQUENCE [LARGE SCALE GENOMIC DNA]</scope>
    <source>
        <strain>ATCC 23344</strain>
    </source>
</reference>
<comment type="cofactor">
    <cofactor evidence="1">
        <name>Zn(2+)</name>
        <dbReference type="ChEBI" id="CHEBI:29105"/>
    </cofactor>
    <text evidence="1">Binds 1 zinc ion per subunit.</text>
</comment>
<comment type="subcellular location">
    <subcellularLocation>
        <location evidence="1">Cell inner membrane</location>
        <topology evidence="1">Multi-pass membrane protein</topology>
    </subcellularLocation>
</comment>
<comment type="similarity">
    <text evidence="1">Belongs to the peptidase M48B family.</text>
</comment>
<sequence>MFNWVKTAMLMAAITALFIVIGGMIGGSRGMTIALLIALGMNFFSYWFSDKMVLRMYNAQEVDEATAPQFYRMVRELATRANLPMPRVYLIDENQPNAFATGRNPEHAAVAATTGILRVLSEREMRGVMAHELAHVKHRDILISTISATMAGAISALANFAMFFGGRDENGRPANPIAGIAVALLAPIAGALIQMAISRAREFEADRGGAQISGDPQALASALDKIHRYASGIPFQTAEEHPATAQMMIMNPLSGGGLQNLFSTHPATEERIARLMDMARTGRFD</sequence>
<protein>
    <recommendedName>
        <fullName evidence="1">Protease HtpX homolog</fullName>
        <ecNumber evidence="1">3.4.24.-</ecNumber>
    </recommendedName>
</protein>
<name>HTPX_BURMA</name>
<keyword id="KW-0997">Cell inner membrane</keyword>
<keyword id="KW-1003">Cell membrane</keyword>
<keyword id="KW-0378">Hydrolase</keyword>
<keyword id="KW-0472">Membrane</keyword>
<keyword id="KW-0479">Metal-binding</keyword>
<keyword id="KW-0482">Metalloprotease</keyword>
<keyword id="KW-0645">Protease</keyword>
<keyword id="KW-1185">Reference proteome</keyword>
<keyword id="KW-0812">Transmembrane</keyword>
<keyword id="KW-1133">Transmembrane helix</keyword>
<keyword id="KW-0862">Zinc</keyword>
<proteinExistence type="inferred from homology"/>
<accession>Q62MT2</accession>
<gene>
    <name evidence="1" type="primary">htpX</name>
    <name type="ordered locus">BMA0145</name>
</gene>